<feature type="chain" id="PRO_0000313322" description="DNA ligase">
    <location>
        <begin position="1"/>
        <end position="692"/>
    </location>
</feature>
<feature type="domain" description="BRCT" evidence="1">
    <location>
        <begin position="611"/>
        <end position="692"/>
    </location>
</feature>
<feature type="active site" description="N6-AMP-lysine intermediate" evidence="1">
    <location>
        <position position="119"/>
    </location>
</feature>
<feature type="binding site" evidence="1">
    <location>
        <begin position="35"/>
        <end position="39"/>
    </location>
    <ligand>
        <name>NAD(+)</name>
        <dbReference type="ChEBI" id="CHEBI:57540"/>
    </ligand>
</feature>
<feature type="binding site" evidence="1">
    <location>
        <begin position="88"/>
        <end position="89"/>
    </location>
    <ligand>
        <name>NAD(+)</name>
        <dbReference type="ChEBI" id="CHEBI:57540"/>
    </ligand>
</feature>
<feature type="binding site" evidence="1">
    <location>
        <position position="117"/>
    </location>
    <ligand>
        <name>NAD(+)</name>
        <dbReference type="ChEBI" id="CHEBI:57540"/>
    </ligand>
</feature>
<feature type="binding site" evidence="1">
    <location>
        <position position="140"/>
    </location>
    <ligand>
        <name>NAD(+)</name>
        <dbReference type="ChEBI" id="CHEBI:57540"/>
    </ligand>
</feature>
<feature type="binding site" evidence="1">
    <location>
        <position position="176"/>
    </location>
    <ligand>
        <name>NAD(+)</name>
        <dbReference type="ChEBI" id="CHEBI:57540"/>
    </ligand>
</feature>
<feature type="binding site" evidence="1">
    <location>
        <position position="301"/>
    </location>
    <ligand>
        <name>NAD(+)</name>
        <dbReference type="ChEBI" id="CHEBI:57540"/>
    </ligand>
</feature>
<feature type="binding site" evidence="1">
    <location>
        <position position="325"/>
    </location>
    <ligand>
        <name>NAD(+)</name>
        <dbReference type="ChEBI" id="CHEBI:57540"/>
    </ligand>
</feature>
<feature type="binding site" evidence="1">
    <location>
        <position position="416"/>
    </location>
    <ligand>
        <name>Zn(2+)</name>
        <dbReference type="ChEBI" id="CHEBI:29105"/>
    </ligand>
</feature>
<feature type="binding site" evidence="1">
    <location>
        <position position="419"/>
    </location>
    <ligand>
        <name>Zn(2+)</name>
        <dbReference type="ChEBI" id="CHEBI:29105"/>
    </ligand>
</feature>
<feature type="binding site" evidence="1">
    <location>
        <position position="434"/>
    </location>
    <ligand>
        <name>Zn(2+)</name>
        <dbReference type="ChEBI" id="CHEBI:29105"/>
    </ligand>
</feature>
<feature type="binding site" evidence="1">
    <location>
        <position position="439"/>
    </location>
    <ligand>
        <name>Zn(2+)</name>
        <dbReference type="ChEBI" id="CHEBI:29105"/>
    </ligand>
</feature>
<proteinExistence type="inferred from homology"/>
<gene>
    <name evidence="1" type="primary">ligA</name>
    <name type="ordered locus">MHP7448_0266</name>
</gene>
<protein>
    <recommendedName>
        <fullName evidence="1">DNA ligase</fullName>
        <ecNumber evidence="1">6.5.1.2</ecNumber>
    </recommendedName>
    <alternativeName>
        <fullName evidence="1">Polydeoxyribonucleotide synthase [NAD(+)]</fullName>
    </alternativeName>
</protein>
<name>DNLJ_MESH7</name>
<accession>Q4A899</accession>
<reference key="1">
    <citation type="journal article" date="2005" name="J. Bacteriol.">
        <title>Swine and poultry pathogens: the complete genome sequences of two strains of Mycoplasma hyopneumoniae and a strain of Mycoplasma synoviae.</title>
        <authorList>
            <person name="Vasconcelos A.T.R."/>
            <person name="Ferreira H.B."/>
            <person name="Bizarro C.V."/>
            <person name="Bonatto S.L."/>
            <person name="Carvalho M.O."/>
            <person name="Pinto P.M."/>
            <person name="Almeida D.F."/>
            <person name="Almeida L.G.P."/>
            <person name="Almeida R."/>
            <person name="Alves-Junior L."/>
            <person name="Assuncao E.N."/>
            <person name="Azevedo V.A.C."/>
            <person name="Bogo M.R."/>
            <person name="Brigido M.M."/>
            <person name="Brocchi M."/>
            <person name="Burity H.A."/>
            <person name="Camargo A.A."/>
            <person name="Camargo S.S."/>
            <person name="Carepo M.S."/>
            <person name="Carraro D.M."/>
            <person name="de Mattos Cascardo J.C."/>
            <person name="Castro L.A."/>
            <person name="Cavalcanti G."/>
            <person name="Chemale G."/>
            <person name="Collevatti R.G."/>
            <person name="Cunha C.W."/>
            <person name="Dallagiovanna B."/>
            <person name="Dambros B.P."/>
            <person name="Dellagostin O.A."/>
            <person name="Falcao C."/>
            <person name="Fantinatti-Garboggini F."/>
            <person name="Felipe M.S.S."/>
            <person name="Fiorentin L."/>
            <person name="Franco G.R."/>
            <person name="Freitas N.S.A."/>
            <person name="Frias D."/>
            <person name="Grangeiro T.B."/>
            <person name="Grisard E.C."/>
            <person name="Guimaraes C.T."/>
            <person name="Hungria M."/>
            <person name="Jardim S.N."/>
            <person name="Krieger M.A."/>
            <person name="Laurino J.P."/>
            <person name="Lima L.F.A."/>
            <person name="Lopes M.I."/>
            <person name="Loreto E.L.S."/>
            <person name="Madeira H.M.F."/>
            <person name="Manfio G.P."/>
            <person name="Maranhao A.Q."/>
            <person name="Martinkovics C.T."/>
            <person name="Medeiros S.R.B."/>
            <person name="Moreira M.A.M."/>
            <person name="Neiva M."/>
            <person name="Ramalho-Neto C.E."/>
            <person name="Nicolas M.F."/>
            <person name="Oliveira S.C."/>
            <person name="Paixao R.F.C."/>
            <person name="Pedrosa F.O."/>
            <person name="Pena S.D.J."/>
            <person name="Pereira M."/>
            <person name="Pereira-Ferrari L."/>
            <person name="Piffer I."/>
            <person name="Pinto L.S."/>
            <person name="Potrich D.P."/>
            <person name="Salim A.C.M."/>
            <person name="Santos F.R."/>
            <person name="Schmitt R."/>
            <person name="Schneider M.P.C."/>
            <person name="Schrank A."/>
            <person name="Schrank I.S."/>
            <person name="Schuck A.F."/>
            <person name="Seuanez H.N."/>
            <person name="Silva D.W."/>
            <person name="Silva R."/>
            <person name="Silva S.C."/>
            <person name="Soares C.M.A."/>
            <person name="Souza K.R.L."/>
            <person name="Souza R.C."/>
            <person name="Staats C.C."/>
            <person name="Steffens M.B.R."/>
            <person name="Teixeira S.M.R."/>
            <person name="Urmenyi T.P."/>
            <person name="Vainstein M.H."/>
            <person name="Zuccherato L.W."/>
            <person name="Simpson A.J.G."/>
            <person name="Zaha A."/>
        </authorList>
    </citation>
    <scope>NUCLEOTIDE SEQUENCE [LARGE SCALE GENOMIC DNA]</scope>
    <source>
        <strain>7448</strain>
    </source>
</reference>
<keyword id="KW-0227">DNA damage</keyword>
<keyword id="KW-0234">DNA repair</keyword>
<keyword id="KW-0235">DNA replication</keyword>
<keyword id="KW-0436">Ligase</keyword>
<keyword id="KW-0460">Magnesium</keyword>
<keyword id="KW-0464">Manganese</keyword>
<keyword id="KW-0479">Metal-binding</keyword>
<keyword id="KW-0520">NAD</keyword>
<keyword id="KW-0862">Zinc</keyword>
<sequence length="692" mass="79468">MKKNSQIRAKIIELREKIEKWNHHYYQLQNPLVDDLVYDKTLRELEKLERENFFLFSLEELNQSPSQKVGSKITSKFEKVAHSSPMLSLNKAYSNEELEKWAKKAREILKTVTFFVEPKIDGIALSLFYQNGNLIKALTRGDGVFGENVLVNALKINDEFIPKKINYLEDLEVRGEIYIDNSTFASLQLETKKFKNPRNAASGILRRYKNHKPKIDAKSIKFLEEESDFRYLKSFFYTLVNPEKHKINSQFDSINFLRNLGFQVNPFQKKCSDLKDVFNFISIIKQKRDFLNYNIDGVVVKVNEFSIYEKLGSTSKFPHSAIAFKFEDDIAKTKLLAIFATIGRTGKVTYNAKIEPVTLAGSKISSAILPNYSYIENLKLNLNTEVYIKKAGEIIPQIIGSVHNYPKTNFSIVKNCPKCNSELVNSESGLDQFCQNQFCPEIILQKIVHFCSKNALNIESLAQKRIEKFLEKGLISSACDIFYLKDKLELIYERLSNKNQLLTKQNASQSMQIKSIMKLLNEVERAKNIDFYRLIFGLGIRNVGLKAAKILSRYASNLSELRNLDFNLLKNQHDFGPVIIESLIDYFNNQKNSEQLNCLETVGFNFKTTFLTNQSNSWASFAISGKLSKPRDEYVRIIEESGASFHESVTKKTDFLLLGQSAGSKIEKAKKAGIKIINEVQFFDLIKNSKKT</sequence>
<evidence type="ECO:0000255" key="1">
    <source>
        <dbReference type="HAMAP-Rule" id="MF_01588"/>
    </source>
</evidence>
<organism>
    <name type="scientific">Mesomycoplasma hyopneumoniae (strain 7448)</name>
    <name type="common">Mycoplasma hyopneumoniae</name>
    <dbReference type="NCBI Taxonomy" id="262722"/>
    <lineage>
        <taxon>Bacteria</taxon>
        <taxon>Bacillati</taxon>
        <taxon>Mycoplasmatota</taxon>
        <taxon>Mycoplasmoidales</taxon>
        <taxon>Metamycoplasmataceae</taxon>
        <taxon>Mesomycoplasma</taxon>
    </lineage>
</organism>
<dbReference type="EC" id="6.5.1.2" evidence="1"/>
<dbReference type="EMBL" id="AE017244">
    <property type="protein sequence ID" value="AAZ53640.2"/>
    <property type="molecule type" value="Genomic_DNA"/>
</dbReference>
<dbReference type="RefSeq" id="WP_020835646.1">
    <property type="nucleotide sequence ID" value="NC_007332.1"/>
</dbReference>
<dbReference type="SMR" id="Q4A899"/>
<dbReference type="KEGG" id="mhp:MHP7448_0266"/>
<dbReference type="HOGENOM" id="CLU_007764_2_0_14"/>
<dbReference type="Proteomes" id="UP000000553">
    <property type="component" value="Chromosome"/>
</dbReference>
<dbReference type="GO" id="GO:0003911">
    <property type="term" value="F:DNA ligase (NAD+) activity"/>
    <property type="evidence" value="ECO:0007669"/>
    <property type="project" value="UniProtKB-UniRule"/>
</dbReference>
<dbReference type="GO" id="GO:0046872">
    <property type="term" value="F:metal ion binding"/>
    <property type="evidence" value="ECO:0007669"/>
    <property type="project" value="UniProtKB-KW"/>
</dbReference>
<dbReference type="GO" id="GO:0006281">
    <property type="term" value="P:DNA repair"/>
    <property type="evidence" value="ECO:0007669"/>
    <property type="project" value="UniProtKB-KW"/>
</dbReference>
<dbReference type="GO" id="GO:0006260">
    <property type="term" value="P:DNA replication"/>
    <property type="evidence" value="ECO:0007669"/>
    <property type="project" value="UniProtKB-KW"/>
</dbReference>
<dbReference type="CDD" id="cd17748">
    <property type="entry name" value="BRCT_DNA_ligase_like"/>
    <property type="match status" value="1"/>
</dbReference>
<dbReference type="CDD" id="cd00114">
    <property type="entry name" value="LIGANc"/>
    <property type="match status" value="1"/>
</dbReference>
<dbReference type="Gene3D" id="1.10.150.20">
    <property type="entry name" value="5' to 3' exonuclease, C-terminal subdomain"/>
    <property type="match status" value="2"/>
</dbReference>
<dbReference type="Gene3D" id="3.40.50.10190">
    <property type="entry name" value="BRCT domain"/>
    <property type="match status" value="1"/>
</dbReference>
<dbReference type="Gene3D" id="3.30.470.30">
    <property type="entry name" value="DNA ligase/mRNA capping enzyme"/>
    <property type="match status" value="1"/>
</dbReference>
<dbReference type="Gene3D" id="1.10.287.610">
    <property type="entry name" value="Helix hairpin bin"/>
    <property type="match status" value="1"/>
</dbReference>
<dbReference type="Gene3D" id="2.40.50.140">
    <property type="entry name" value="Nucleic acid-binding proteins"/>
    <property type="match status" value="1"/>
</dbReference>
<dbReference type="HAMAP" id="MF_01588">
    <property type="entry name" value="DNA_ligase_A"/>
    <property type="match status" value="1"/>
</dbReference>
<dbReference type="InterPro" id="IPR001357">
    <property type="entry name" value="BRCT_dom"/>
</dbReference>
<dbReference type="InterPro" id="IPR036420">
    <property type="entry name" value="BRCT_dom_sf"/>
</dbReference>
<dbReference type="InterPro" id="IPR041663">
    <property type="entry name" value="DisA/LigA_HHH"/>
</dbReference>
<dbReference type="InterPro" id="IPR001679">
    <property type="entry name" value="DNA_ligase"/>
</dbReference>
<dbReference type="InterPro" id="IPR018239">
    <property type="entry name" value="DNA_ligase_AS"/>
</dbReference>
<dbReference type="InterPro" id="IPR013839">
    <property type="entry name" value="DNAligase_adenylation"/>
</dbReference>
<dbReference type="InterPro" id="IPR013840">
    <property type="entry name" value="DNAligase_N"/>
</dbReference>
<dbReference type="InterPro" id="IPR012340">
    <property type="entry name" value="NA-bd_OB-fold"/>
</dbReference>
<dbReference type="InterPro" id="IPR004150">
    <property type="entry name" value="NAD_DNA_ligase_OB"/>
</dbReference>
<dbReference type="InterPro" id="IPR010994">
    <property type="entry name" value="RuvA_2-like"/>
</dbReference>
<dbReference type="InterPro" id="IPR004149">
    <property type="entry name" value="Znf_DNAligase_C4"/>
</dbReference>
<dbReference type="NCBIfam" id="TIGR00575">
    <property type="entry name" value="dnlj"/>
    <property type="match status" value="1"/>
</dbReference>
<dbReference type="NCBIfam" id="NF005932">
    <property type="entry name" value="PRK07956.1"/>
    <property type="match status" value="1"/>
</dbReference>
<dbReference type="Pfam" id="PF00533">
    <property type="entry name" value="BRCT"/>
    <property type="match status" value="1"/>
</dbReference>
<dbReference type="Pfam" id="PF01653">
    <property type="entry name" value="DNA_ligase_aden"/>
    <property type="match status" value="1"/>
</dbReference>
<dbReference type="Pfam" id="PF03120">
    <property type="entry name" value="DNA_ligase_OB"/>
    <property type="match status" value="1"/>
</dbReference>
<dbReference type="Pfam" id="PF03119">
    <property type="entry name" value="DNA_ligase_ZBD"/>
    <property type="match status" value="1"/>
</dbReference>
<dbReference type="Pfam" id="PF12826">
    <property type="entry name" value="HHH_2"/>
    <property type="match status" value="1"/>
</dbReference>
<dbReference type="PIRSF" id="PIRSF001604">
    <property type="entry name" value="LigA"/>
    <property type="match status" value="1"/>
</dbReference>
<dbReference type="SMART" id="SM00292">
    <property type="entry name" value="BRCT"/>
    <property type="match status" value="1"/>
</dbReference>
<dbReference type="SMART" id="SM00532">
    <property type="entry name" value="LIGANc"/>
    <property type="match status" value="1"/>
</dbReference>
<dbReference type="SUPFAM" id="SSF52113">
    <property type="entry name" value="BRCT domain"/>
    <property type="match status" value="1"/>
</dbReference>
<dbReference type="SUPFAM" id="SSF56091">
    <property type="entry name" value="DNA ligase/mRNA capping enzyme, catalytic domain"/>
    <property type="match status" value="1"/>
</dbReference>
<dbReference type="SUPFAM" id="SSF50249">
    <property type="entry name" value="Nucleic acid-binding proteins"/>
    <property type="match status" value="1"/>
</dbReference>
<dbReference type="SUPFAM" id="SSF47781">
    <property type="entry name" value="RuvA domain 2-like"/>
    <property type="match status" value="1"/>
</dbReference>
<dbReference type="PROSITE" id="PS50172">
    <property type="entry name" value="BRCT"/>
    <property type="match status" value="1"/>
</dbReference>
<dbReference type="PROSITE" id="PS01055">
    <property type="entry name" value="DNA_LIGASE_N1"/>
    <property type="match status" value="1"/>
</dbReference>
<comment type="function">
    <text evidence="1">DNA ligase that catalyzes the formation of phosphodiester linkages between 5'-phosphoryl and 3'-hydroxyl groups in double-stranded DNA using NAD as a coenzyme and as the energy source for the reaction. It is essential for DNA replication and repair of damaged DNA.</text>
</comment>
<comment type="catalytic activity">
    <reaction evidence="1">
        <text>NAD(+) + (deoxyribonucleotide)n-3'-hydroxyl + 5'-phospho-(deoxyribonucleotide)m = (deoxyribonucleotide)n+m + AMP + beta-nicotinamide D-nucleotide.</text>
        <dbReference type="EC" id="6.5.1.2"/>
    </reaction>
</comment>
<comment type="cofactor">
    <cofactor evidence="1">
        <name>Mg(2+)</name>
        <dbReference type="ChEBI" id="CHEBI:18420"/>
    </cofactor>
    <cofactor evidence="1">
        <name>Mn(2+)</name>
        <dbReference type="ChEBI" id="CHEBI:29035"/>
    </cofactor>
</comment>
<comment type="similarity">
    <text evidence="1">Belongs to the NAD-dependent DNA ligase family. LigA subfamily.</text>
</comment>